<comment type="function">
    <text evidence="3">Component of SEC61 channel-forming translocon complex that mediates transport of signal peptide-containing precursor polypeptides across the endoplasmic reticulum (ER). Forms a ribosome receptor and a gated pore in the ER membrane, both functions required for cotranslational translocation of nascent polypeptides. May cooperate with auxiliary protein SEC62, SEC63 and HSPA5/BiP to enable post-translational transport of small presecretory proteins. The SEC61 channel is also involved in ER membrane insertion of transmembrane proteins: it mediates membrane insertion of the first few transmembrane segments of proteins, while insertion of subsequent transmembrane regions of multi-pass membrane proteins is mediated by the multi-pass translocon (MPT) complex.</text>
</comment>
<comment type="subunit">
    <text evidence="2 3">The SEC61 channel-forming translocon complex consists of channel-forming core components SEC61A1, SEC61B and SEC61G and different auxiliary components such as SEC62 and SEC63 (By similarity). The SEC61 channel associates with the multi-pass translocon (MPT) complex (By similarity).</text>
</comment>
<comment type="subcellular location">
    <subcellularLocation>
        <location evidence="3">Endoplasmic reticulum membrane</location>
        <topology evidence="3">Multi-pass membrane protein</topology>
    </subcellularLocation>
</comment>
<comment type="similarity">
    <text evidence="5">Belongs to the SecY/SEC61-alpha family.</text>
</comment>
<sequence>MGIKFLEVIKPFCAVLPEIQKPERKIQFREKVLWTAITLFIFLVCCQIPLFGIMSSDSADPFYWMRVILASNRGTLMELGISPIVTSGLIMQLLAGAKIIEVGDTPKDRALFNGAQKLFGMIITIGQSIVYVMTGMYGDPSEMGAGICLLIIIQLFVAGLIVLLLDELLQKGYGLGSGISLFIATNICETIVWKAFSPTTVNTGRGTEFEGAIIALFHLLATRTDKVRALREAFYRQNLPNLLNLIATVFVFAVVIYFQGFRVDLPIKSARYRGQYNTYPIKLFYTSNIPIILQSALVSNLYVISQMLSTRFSGNFLVNLLGTWSDTSTGGPARAYPVGGLCYFLSPPESFGSVLDDPIHAAIYIVFMLGSCAFFSKTWIEVSGSSAKDVAKQLKEQQMVMGGHRETSMVHELNRYIPTAAAFGGLCIGGLSVMADFLGAIGSGTGILLAVTIIYQYFEIFVKEQSEMGSMGALLF</sequence>
<proteinExistence type="evidence at transcript level"/>
<protein>
    <recommendedName>
        <fullName>Protein transport protein Sec61 subunit alpha isoform A</fullName>
    </recommendedName>
</protein>
<keyword id="KW-0217">Developmental protein</keyword>
<keyword id="KW-0256">Endoplasmic reticulum</keyword>
<keyword id="KW-0472">Membrane</keyword>
<keyword id="KW-0653">Protein transport</keyword>
<keyword id="KW-0811">Translocation</keyword>
<keyword id="KW-0812">Transmembrane</keyword>
<keyword id="KW-1133">Transmembrane helix</keyword>
<keyword id="KW-0813">Transport</keyword>
<evidence type="ECO:0000250" key="1"/>
<evidence type="ECO:0000250" key="2">
    <source>
        <dbReference type="UniProtKB" id="P38377"/>
    </source>
</evidence>
<evidence type="ECO:0000250" key="3">
    <source>
        <dbReference type="UniProtKB" id="P61619"/>
    </source>
</evidence>
<evidence type="ECO:0000255" key="4"/>
<evidence type="ECO:0000305" key="5"/>
<name>S61A1_ONCMY</name>
<accession>Q98SN9</accession>
<organism>
    <name type="scientific">Oncorhynchus mykiss</name>
    <name type="common">Rainbow trout</name>
    <name type="synonym">Salmo gairdneri</name>
    <dbReference type="NCBI Taxonomy" id="8022"/>
    <lineage>
        <taxon>Eukaryota</taxon>
        <taxon>Metazoa</taxon>
        <taxon>Chordata</taxon>
        <taxon>Craniata</taxon>
        <taxon>Vertebrata</taxon>
        <taxon>Euteleostomi</taxon>
        <taxon>Actinopterygii</taxon>
        <taxon>Neopterygii</taxon>
        <taxon>Teleostei</taxon>
        <taxon>Protacanthopterygii</taxon>
        <taxon>Salmoniformes</taxon>
        <taxon>Salmonidae</taxon>
        <taxon>Salmoninae</taxon>
        <taxon>Oncorhynchus</taxon>
    </lineage>
</organism>
<feature type="initiator methionine" description="Removed" evidence="1">
    <location>
        <position position="1"/>
    </location>
</feature>
<feature type="chain" id="PRO_0000131806" description="Protein transport protein Sec61 subunit alpha isoform A">
    <location>
        <begin position="2"/>
        <end position="476"/>
    </location>
</feature>
<feature type="topological domain" description="Cytoplasmic" evidence="4">
    <location>
        <begin position="2"/>
        <end position="33"/>
    </location>
</feature>
<feature type="transmembrane region" description="Helical" evidence="4">
    <location>
        <begin position="34"/>
        <end position="53"/>
    </location>
</feature>
<feature type="topological domain" description="Lumenal" evidence="4">
    <location>
        <begin position="54"/>
        <end position="76"/>
    </location>
</feature>
<feature type="transmembrane region" description="Helical" evidence="4">
    <location>
        <begin position="77"/>
        <end position="96"/>
    </location>
</feature>
<feature type="topological domain" description="Cytoplasmic" evidence="4">
    <location>
        <begin position="97"/>
        <end position="117"/>
    </location>
</feature>
<feature type="transmembrane region" description="Helical" evidence="4">
    <location>
        <begin position="118"/>
        <end position="138"/>
    </location>
</feature>
<feature type="topological domain" description="Lumenal" evidence="4">
    <location>
        <begin position="139"/>
        <end position="144"/>
    </location>
</feature>
<feature type="transmembrane region" description="Helical" evidence="4">
    <location>
        <begin position="145"/>
        <end position="165"/>
    </location>
</feature>
<feature type="topological domain" description="Cytoplasmic" evidence="4">
    <location>
        <begin position="166"/>
        <end position="172"/>
    </location>
</feature>
<feature type="transmembrane region" description="Helical" evidence="4">
    <location>
        <begin position="173"/>
        <end position="193"/>
    </location>
</feature>
<feature type="topological domain" description="Lumenal" evidence="4">
    <location>
        <begin position="194"/>
        <end position="240"/>
    </location>
</feature>
<feature type="transmembrane region" description="Helical" evidence="4">
    <location>
        <begin position="241"/>
        <end position="261"/>
    </location>
</feature>
<feature type="topological domain" description="Cytoplasmic" evidence="4">
    <location>
        <begin position="262"/>
        <end position="288"/>
    </location>
</feature>
<feature type="transmembrane region" description="Helical" evidence="4">
    <location>
        <begin position="289"/>
        <end position="309"/>
    </location>
</feature>
<feature type="topological domain" description="Lumenal" evidence="4">
    <location>
        <begin position="310"/>
        <end position="354"/>
    </location>
</feature>
<feature type="transmembrane region" description="Helical" evidence="4">
    <location>
        <begin position="355"/>
        <end position="375"/>
    </location>
</feature>
<feature type="topological domain" description="Cytoplasmic" evidence="4">
    <location>
        <begin position="376"/>
        <end position="420"/>
    </location>
</feature>
<feature type="transmembrane region" description="Helical" evidence="4">
    <location>
        <begin position="421"/>
        <end position="441"/>
    </location>
</feature>
<feature type="topological domain" description="Lumenal" evidence="4">
    <location>
        <begin position="442"/>
        <end position="445"/>
    </location>
</feature>
<feature type="transmembrane region" description="Helical" evidence="4">
    <location>
        <begin position="446"/>
        <end position="462"/>
    </location>
</feature>
<feature type="topological domain" description="Cytoplasmic" evidence="4">
    <location>
        <begin position="463"/>
        <end position="476"/>
    </location>
</feature>
<dbReference type="EMBL" id="AF346600">
    <property type="protein sequence ID" value="AAK29081.1"/>
    <property type="molecule type" value="mRNA"/>
</dbReference>
<dbReference type="RefSeq" id="NP_001118075.1">
    <property type="nucleotide sequence ID" value="NM_001124603.1"/>
</dbReference>
<dbReference type="SMR" id="Q98SN9"/>
<dbReference type="Ensembl" id="ENSOMYT00000105336.2">
    <property type="protein sequence ID" value="ENSOMYP00000096956.1"/>
    <property type="gene ID" value="ENSOMYG00000043959.2"/>
</dbReference>
<dbReference type="GeneID" id="100136621"/>
<dbReference type="KEGG" id="omy:100136621"/>
<dbReference type="GeneTree" id="ENSGT00390000003721"/>
<dbReference type="OrthoDB" id="420669at2759"/>
<dbReference type="Proteomes" id="UP000694395">
    <property type="component" value="Chromosome 17"/>
</dbReference>
<dbReference type="GO" id="GO:0005789">
    <property type="term" value="C:endoplasmic reticulum membrane"/>
    <property type="evidence" value="ECO:0000250"/>
    <property type="project" value="UniProtKB"/>
</dbReference>
<dbReference type="GO" id="GO:0039019">
    <property type="term" value="P:pronephric nephron development"/>
    <property type="evidence" value="ECO:0000250"/>
    <property type="project" value="UniProtKB"/>
</dbReference>
<dbReference type="GO" id="GO:0045047">
    <property type="term" value="P:protein targeting to ER"/>
    <property type="evidence" value="ECO:0000250"/>
    <property type="project" value="UniProtKB"/>
</dbReference>
<dbReference type="GO" id="GO:0015031">
    <property type="term" value="P:protein transport"/>
    <property type="evidence" value="ECO:0007669"/>
    <property type="project" value="UniProtKB-KW"/>
</dbReference>
<dbReference type="FunFam" id="1.10.3370.10:FF:000002">
    <property type="entry name" value="Transport Sec61 subunit alpha isoform 2"/>
    <property type="match status" value="1"/>
</dbReference>
<dbReference type="Gene3D" id="1.10.3370.10">
    <property type="entry name" value="SecY subunit domain"/>
    <property type="match status" value="1"/>
</dbReference>
<dbReference type="InterPro" id="IPR002208">
    <property type="entry name" value="SecY/SEC61-alpha"/>
</dbReference>
<dbReference type="InterPro" id="IPR030659">
    <property type="entry name" value="SecY_CS"/>
</dbReference>
<dbReference type="InterPro" id="IPR023201">
    <property type="entry name" value="SecY_dom_sf"/>
</dbReference>
<dbReference type="InterPro" id="IPR019561">
    <property type="entry name" value="Translocon_Sec61/SecY_plug_dom"/>
</dbReference>
<dbReference type="NCBIfam" id="TIGR00967">
    <property type="entry name" value="3a0501s007"/>
    <property type="match status" value="1"/>
</dbReference>
<dbReference type="NCBIfam" id="NF006341">
    <property type="entry name" value="PRK08568.1-5"/>
    <property type="match status" value="1"/>
</dbReference>
<dbReference type="PANTHER" id="PTHR10906">
    <property type="entry name" value="SECY/SEC61-ALPHA FAMILY MEMBER"/>
    <property type="match status" value="1"/>
</dbReference>
<dbReference type="Pfam" id="PF10559">
    <property type="entry name" value="Plug_translocon"/>
    <property type="match status" value="1"/>
</dbReference>
<dbReference type="Pfam" id="PF00344">
    <property type="entry name" value="SecY"/>
    <property type="match status" value="1"/>
</dbReference>
<dbReference type="PIRSF" id="PIRSF004557">
    <property type="entry name" value="SecY"/>
    <property type="match status" value="1"/>
</dbReference>
<dbReference type="SUPFAM" id="SSF103491">
    <property type="entry name" value="Preprotein translocase SecY subunit"/>
    <property type="match status" value="1"/>
</dbReference>
<dbReference type="PROSITE" id="PS00755">
    <property type="entry name" value="SECY_1"/>
    <property type="match status" value="1"/>
</dbReference>
<dbReference type="PROSITE" id="PS00756">
    <property type="entry name" value="SECY_2"/>
    <property type="match status" value="1"/>
</dbReference>
<gene>
    <name type="primary">sec61aa</name>
</gene>
<reference key="1">
    <citation type="submission" date="2001-02" db="EMBL/GenBank/DDBJ databases">
        <title>Sec61 alpha isoforms.</title>
        <authorList>
            <person name="Finke K."/>
            <person name="Prehn S."/>
            <person name="Hartmann E."/>
        </authorList>
    </citation>
    <scope>NUCLEOTIDE SEQUENCE [MRNA]</scope>
</reference>